<accession>P20369</accession>
<reference key="1">
    <citation type="journal article" date="1990" name="Yeast">
        <title>The alcohol dehydrogenase system in the yeast, Kluyveromyces lactis.</title>
        <authorList>
            <person name="Saliola M."/>
            <person name="Shuster J.R."/>
            <person name="Falcone C."/>
        </authorList>
    </citation>
    <scope>NUCLEOTIDE SEQUENCE [GENOMIC DNA]</scope>
</reference>
<reference key="2">
    <citation type="journal article" date="2004" name="Nature">
        <title>Genome evolution in yeasts.</title>
        <authorList>
            <person name="Dujon B."/>
            <person name="Sherman D."/>
            <person name="Fischer G."/>
            <person name="Durrens P."/>
            <person name="Casaregola S."/>
            <person name="Lafontaine I."/>
            <person name="de Montigny J."/>
            <person name="Marck C."/>
            <person name="Neuveglise C."/>
            <person name="Talla E."/>
            <person name="Goffard N."/>
            <person name="Frangeul L."/>
            <person name="Aigle M."/>
            <person name="Anthouard V."/>
            <person name="Babour A."/>
            <person name="Barbe V."/>
            <person name="Barnay S."/>
            <person name="Blanchin S."/>
            <person name="Beckerich J.-M."/>
            <person name="Beyne E."/>
            <person name="Bleykasten C."/>
            <person name="Boisrame A."/>
            <person name="Boyer J."/>
            <person name="Cattolico L."/>
            <person name="Confanioleri F."/>
            <person name="de Daruvar A."/>
            <person name="Despons L."/>
            <person name="Fabre E."/>
            <person name="Fairhead C."/>
            <person name="Ferry-Dumazet H."/>
            <person name="Groppi A."/>
            <person name="Hantraye F."/>
            <person name="Hennequin C."/>
            <person name="Jauniaux N."/>
            <person name="Joyet P."/>
            <person name="Kachouri R."/>
            <person name="Kerrest A."/>
            <person name="Koszul R."/>
            <person name="Lemaire M."/>
            <person name="Lesur I."/>
            <person name="Ma L."/>
            <person name="Muller H."/>
            <person name="Nicaud J.-M."/>
            <person name="Nikolski M."/>
            <person name="Oztas S."/>
            <person name="Ozier-Kalogeropoulos O."/>
            <person name="Pellenz S."/>
            <person name="Potier S."/>
            <person name="Richard G.-F."/>
            <person name="Straub M.-L."/>
            <person name="Suleau A."/>
            <person name="Swennen D."/>
            <person name="Tekaia F."/>
            <person name="Wesolowski-Louvel M."/>
            <person name="Westhof E."/>
            <person name="Wirth B."/>
            <person name="Zeniou-Meyer M."/>
            <person name="Zivanovic Y."/>
            <person name="Bolotin-Fukuhara M."/>
            <person name="Thierry A."/>
            <person name="Bouchier C."/>
            <person name="Caudron B."/>
            <person name="Scarpelli C."/>
            <person name="Gaillardin C."/>
            <person name="Weissenbach J."/>
            <person name="Wincker P."/>
            <person name="Souciet J.-L."/>
        </authorList>
    </citation>
    <scope>NUCLEOTIDE SEQUENCE [LARGE SCALE GENOMIC DNA]</scope>
    <source>
        <strain>ATCC 8585 / CBS 2359 / DSM 70799 / NBRC 1267 / NRRL Y-1140 / WM37</strain>
    </source>
</reference>
<name>ADH1_KLULA</name>
<evidence type="ECO:0000250" key="1"/>
<evidence type="ECO:0000305" key="2"/>
<dbReference type="EC" id="1.1.1.1"/>
<dbReference type="EMBL" id="CR382126">
    <property type="protein sequence ID" value="CAG98731.1"/>
    <property type="molecule type" value="Genomic_DNA"/>
</dbReference>
<dbReference type="PIR" id="S09475">
    <property type="entry name" value="S09475"/>
</dbReference>
<dbReference type="RefSeq" id="XP_456023.1">
    <property type="nucleotide sequence ID" value="XM_456023.1"/>
</dbReference>
<dbReference type="SMR" id="P20369"/>
<dbReference type="FunCoup" id="P20369">
    <property type="interactions" value="1054"/>
</dbReference>
<dbReference type="STRING" id="284590.P20369"/>
<dbReference type="PaxDb" id="284590-P20369"/>
<dbReference type="KEGG" id="kla:KLLA0_F21010g"/>
<dbReference type="eggNOG" id="KOG0023">
    <property type="taxonomic scope" value="Eukaryota"/>
</dbReference>
<dbReference type="HOGENOM" id="CLU_026673_20_1_1"/>
<dbReference type="InParanoid" id="P20369"/>
<dbReference type="OMA" id="YKGLKMT"/>
<dbReference type="Proteomes" id="UP000000598">
    <property type="component" value="Chromosome F"/>
</dbReference>
<dbReference type="GO" id="GO:0005737">
    <property type="term" value="C:cytoplasm"/>
    <property type="evidence" value="ECO:0007669"/>
    <property type="project" value="UniProtKB-SubCell"/>
</dbReference>
<dbReference type="GO" id="GO:0004022">
    <property type="term" value="F:alcohol dehydrogenase (NAD+) activity"/>
    <property type="evidence" value="ECO:0007669"/>
    <property type="project" value="UniProtKB-EC"/>
</dbReference>
<dbReference type="GO" id="GO:0008270">
    <property type="term" value="F:zinc ion binding"/>
    <property type="evidence" value="ECO:0007669"/>
    <property type="project" value="InterPro"/>
</dbReference>
<dbReference type="CDD" id="cd08297">
    <property type="entry name" value="CAD3"/>
    <property type="match status" value="1"/>
</dbReference>
<dbReference type="FunFam" id="3.40.50.720:FF:000039">
    <property type="entry name" value="Alcohol dehydrogenase AdhP"/>
    <property type="match status" value="1"/>
</dbReference>
<dbReference type="FunFam" id="3.90.180.10:FF:000002">
    <property type="entry name" value="Alcohol dehydrogenase AdhP"/>
    <property type="match status" value="1"/>
</dbReference>
<dbReference type="Gene3D" id="3.90.180.10">
    <property type="entry name" value="Medium-chain alcohol dehydrogenases, catalytic domain"/>
    <property type="match status" value="1"/>
</dbReference>
<dbReference type="Gene3D" id="3.40.50.720">
    <property type="entry name" value="NAD(P)-binding Rossmann-like Domain"/>
    <property type="match status" value="1"/>
</dbReference>
<dbReference type="InterPro" id="IPR013149">
    <property type="entry name" value="ADH-like_C"/>
</dbReference>
<dbReference type="InterPro" id="IPR013154">
    <property type="entry name" value="ADH-like_N"/>
</dbReference>
<dbReference type="InterPro" id="IPR002328">
    <property type="entry name" value="ADH_Zn_CS"/>
</dbReference>
<dbReference type="InterPro" id="IPR011032">
    <property type="entry name" value="GroES-like_sf"/>
</dbReference>
<dbReference type="InterPro" id="IPR036291">
    <property type="entry name" value="NAD(P)-bd_dom_sf"/>
</dbReference>
<dbReference type="InterPro" id="IPR020843">
    <property type="entry name" value="PKS_ER"/>
</dbReference>
<dbReference type="PANTHER" id="PTHR42940">
    <property type="entry name" value="ALCOHOL DEHYDROGENASE 1-RELATED"/>
    <property type="match status" value="1"/>
</dbReference>
<dbReference type="PANTHER" id="PTHR42940:SF3">
    <property type="entry name" value="ALCOHOL DEHYDROGENASE 1-RELATED"/>
    <property type="match status" value="1"/>
</dbReference>
<dbReference type="Pfam" id="PF08240">
    <property type="entry name" value="ADH_N"/>
    <property type="match status" value="1"/>
</dbReference>
<dbReference type="Pfam" id="PF00107">
    <property type="entry name" value="ADH_zinc_N"/>
    <property type="match status" value="1"/>
</dbReference>
<dbReference type="SMART" id="SM00829">
    <property type="entry name" value="PKS_ER"/>
    <property type="match status" value="1"/>
</dbReference>
<dbReference type="SUPFAM" id="SSF50129">
    <property type="entry name" value="GroES-like"/>
    <property type="match status" value="1"/>
</dbReference>
<dbReference type="SUPFAM" id="SSF51735">
    <property type="entry name" value="NAD(P)-binding Rossmann-fold domains"/>
    <property type="match status" value="1"/>
</dbReference>
<dbReference type="PROSITE" id="PS00059">
    <property type="entry name" value="ADH_ZINC"/>
    <property type="match status" value="1"/>
</dbReference>
<keyword id="KW-0963">Cytoplasm</keyword>
<keyword id="KW-0479">Metal-binding</keyword>
<keyword id="KW-0520">NAD</keyword>
<keyword id="KW-0560">Oxidoreductase</keyword>
<keyword id="KW-1185">Reference proteome</keyword>
<keyword id="KW-0862">Zinc</keyword>
<organism>
    <name type="scientific">Kluyveromyces lactis (strain ATCC 8585 / CBS 2359 / DSM 70799 / NBRC 1267 / NRRL Y-1140 / WM37)</name>
    <name type="common">Yeast</name>
    <name type="synonym">Candida sphaerica</name>
    <dbReference type="NCBI Taxonomy" id="284590"/>
    <lineage>
        <taxon>Eukaryota</taxon>
        <taxon>Fungi</taxon>
        <taxon>Dikarya</taxon>
        <taxon>Ascomycota</taxon>
        <taxon>Saccharomycotina</taxon>
        <taxon>Saccharomycetes</taxon>
        <taxon>Saccharomycetales</taxon>
        <taxon>Saccharomycetaceae</taxon>
        <taxon>Kluyveromyces</taxon>
    </lineage>
</organism>
<gene>
    <name type="primary">ADH1</name>
    <name type="ordered locus">KLLA0F21010g</name>
</gene>
<sequence>MAASIPETQKGVIFYENGGELQYKDIPVPKPKANELLINVKYSGVCHTDLHAWKGDWPLPTKLPLVGGHEGAGVVVAMGENVKGWKIGDFAGIKWLNGSCMSCEYCELSNESNCPEADLSGYTHDGSFQQYATADAVQAAKIPVGTDLAEVAPVLCAGVTVYKALKSANLKAGDWVAISGAAGGLGSLAVQYAKAMGYRVLGIDAGEEKAKLFKDLGGEYFIDFTKSKNIPEEVIEATKGGAHGVINVSVSEFAIEQSTNYVRSNGTVVLVGLPRDAKCKSDVFNQVVKSISIVGSYVGNRADTREAIDFFSRGLVKAPIHVVGLSELPSIYEKMEKGAIVGRYVVDTSK</sequence>
<proteinExistence type="inferred from homology"/>
<feature type="chain" id="PRO_0000160722" description="Alcohol dehydrogenase 1">
    <location>
        <begin position="1"/>
        <end position="350"/>
    </location>
</feature>
<feature type="binding site">
    <location>
        <position position="46"/>
    </location>
    <ligand>
        <name>Zn(2+)</name>
        <dbReference type="ChEBI" id="CHEBI:29105"/>
        <label>1</label>
        <note>catalytic</note>
    </ligand>
</feature>
<feature type="binding site">
    <location>
        <position position="69"/>
    </location>
    <ligand>
        <name>Zn(2+)</name>
        <dbReference type="ChEBI" id="CHEBI:29105"/>
        <label>1</label>
        <note>catalytic</note>
    </ligand>
</feature>
<feature type="binding site">
    <location>
        <position position="100"/>
    </location>
    <ligand>
        <name>Zn(2+)</name>
        <dbReference type="ChEBI" id="CHEBI:29105"/>
        <label>2</label>
    </ligand>
</feature>
<feature type="binding site">
    <location>
        <position position="103"/>
    </location>
    <ligand>
        <name>Zn(2+)</name>
        <dbReference type="ChEBI" id="CHEBI:29105"/>
        <label>2</label>
    </ligand>
</feature>
<feature type="binding site">
    <location>
        <position position="106"/>
    </location>
    <ligand>
        <name>Zn(2+)</name>
        <dbReference type="ChEBI" id="CHEBI:29105"/>
        <label>2</label>
    </ligand>
</feature>
<feature type="binding site">
    <location>
        <position position="114"/>
    </location>
    <ligand>
        <name>Zn(2+)</name>
        <dbReference type="ChEBI" id="CHEBI:29105"/>
        <label>2</label>
    </ligand>
</feature>
<feature type="binding site">
    <location>
        <position position="156"/>
    </location>
    <ligand>
        <name>Zn(2+)</name>
        <dbReference type="ChEBI" id="CHEBI:29105"/>
        <label>1</label>
        <note>catalytic</note>
    </ligand>
</feature>
<feature type="binding site" evidence="1">
    <location>
        <begin position="180"/>
        <end position="186"/>
    </location>
    <ligand>
        <name>NAD(+)</name>
        <dbReference type="ChEBI" id="CHEBI:57540"/>
    </ligand>
</feature>
<feature type="binding site" evidence="1">
    <location>
        <position position="204"/>
    </location>
    <ligand>
        <name>NAD(+)</name>
        <dbReference type="ChEBI" id="CHEBI:57540"/>
    </ligand>
</feature>
<feature type="binding site" evidence="1">
    <location>
        <position position="209"/>
    </location>
    <ligand>
        <name>NAD(+)</name>
        <dbReference type="ChEBI" id="CHEBI:57540"/>
    </ligand>
</feature>
<feature type="binding site" evidence="1">
    <location>
        <begin position="271"/>
        <end position="273"/>
    </location>
    <ligand>
        <name>NAD(+)</name>
        <dbReference type="ChEBI" id="CHEBI:57540"/>
    </ligand>
</feature>
<feature type="binding site" evidence="1">
    <location>
        <position position="343"/>
    </location>
    <ligand>
        <name>NAD(+)</name>
        <dbReference type="ChEBI" id="CHEBI:57540"/>
    </ligand>
</feature>
<protein>
    <recommendedName>
        <fullName>Alcohol dehydrogenase 1</fullName>
        <ecNumber>1.1.1.1</ecNumber>
    </recommendedName>
    <alternativeName>
        <fullName>Alcohol dehydrogenase I</fullName>
    </alternativeName>
</protein>
<comment type="catalytic activity">
    <reaction>
        <text>a primary alcohol + NAD(+) = an aldehyde + NADH + H(+)</text>
        <dbReference type="Rhea" id="RHEA:10736"/>
        <dbReference type="ChEBI" id="CHEBI:15378"/>
        <dbReference type="ChEBI" id="CHEBI:15734"/>
        <dbReference type="ChEBI" id="CHEBI:17478"/>
        <dbReference type="ChEBI" id="CHEBI:57540"/>
        <dbReference type="ChEBI" id="CHEBI:57945"/>
        <dbReference type="EC" id="1.1.1.1"/>
    </reaction>
</comment>
<comment type="catalytic activity">
    <reaction>
        <text>a secondary alcohol + NAD(+) = a ketone + NADH + H(+)</text>
        <dbReference type="Rhea" id="RHEA:10740"/>
        <dbReference type="ChEBI" id="CHEBI:15378"/>
        <dbReference type="ChEBI" id="CHEBI:17087"/>
        <dbReference type="ChEBI" id="CHEBI:35681"/>
        <dbReference type="ChEBI" id="CHEBI:57540"/>
        <dbReference type="ChEBI" id="CHEBI:57945"/>
        <dbReference type="EC" id="1.1.1.1"/>
    </reaction>
</comment>
<comment type="cofactor">
    <cofactor>
        <name>Zn(2+)</name>
        <dbReference type="ChEBI" id="CHEBI:29105"/>
    </cofactor>
    <text>Binds 2 Zn(2+) ions per subunit.</text>
</comment>
<comment type="subunit">
    <text>Homotetramer.</text>
</comment>
<comment type="subcellular location">
    <subcellularLocation>
        <location>Cytoplasm</location>
    </subcellularLocation>
</comment>
<comment type="similarity">
    <text evidence="2">Belongs to the zinc-containing alcohol dehydrogenase family.</text>
</comment>